<keyword id="KW-0150">Chloroplast</keyword>
<keyword id="KW-0275">Fatty acid biosynthesis</keyword>
<keyword id="KW-0276">Fatty acid metabolism</keyword>
<keyword id="KW-0408">Iron</keyword>
<keyword id="KW-0444">Lipid biosynthesis</keyword>
<keyword id="KW-0443">Lipid metabolism</keyword>
<keyword id="KW-0479">Metal-binding</keyword>
<keyword id="KW-0560">Oxidoreductase</keyword>
<keyword id="KW-0934">Plastid</keyword>
<keyword id="KW-0809">Transit peptide</keyword>
<proteinExistence type="evidence at transcript level"/>
<name>STAD3_OPHAA</name>
<comment type="function">
    <text evidence="2">Converts palmitoyl-ACP to (4Z)-hexadec-4-enoyl-ACP by introduction of a cis double bond between carbons 4 and 5 of the acyl chain.</text>
</comment>
<comment type="catalytic activity">
    <reaction evidence="2">
        <text>hexadecanoyl-[ACP] + 2 reduced [2Fe-2S]-[ferredoxin] + O2 + 2 H(+) = (4Z)-hexadecenoyl-[ACP] + 2 oxidized [2Fe-2S]-[ferredoxin] + 2 H2O</text>
        <dbReference type="Rhea" id="RHEA:38043"/>
        <dbReference type="Rhea" id="RHEA-COMP:9652"/>
        <dbReference type="Rhea" id="RHEA-COMP:10000"/>
        <dbReference type="Rhea" id="RHEA-COMP:10001"/>
        <dbReference type="Rhea" id="RHEA-COMP:11488"/>
        <dbReference type="ChEBI" id="CHEBI:15377"/>
        <dbReference type="ChEBI" id="CHEBI:15378"/>
        <dbReference type="ChEBI" id="CHEBI:15379"/>
        <dbReference type="ChEBI" id="CHEBI:33737"/>
        <dbReference type="ChEBI" id="CHEBI:33738"/>
        <dbReference type="ChEBI" id="CHEBI:78483"/>
        <dbReference type="ChEBI" id="CHEBI:85919"/>
        <dbReference type="EC" id="1.14.19.11"/>
    </reaction>
</comment>
<comment type="cofactor">
    <cofactor evidence="1">
        <name>Fe(2+)</name>
        <dbReference type="ChEBI" id="CHEBI:29033"/>
    </cofactor>
    <text evidence="1">Binds 2 Fe(2+) ions per subunit.</text>
</comment>
<comment type="pathway">
    <text>Lipid metabolism; fatty acid metabolism.</text>
</comment>
<comment type="subunit">
    <text evidence="1">Homodimer.</text>
</comment>
<comment type="subcellular location">
    <subcellularLocation>
        <location evidence="1">Plastid</location>
        <location evidence="1">Chloroplast stroma</location>
    </subcellularLocation>
</comment>
<comment type="tissue specificity">
    <text evidence="4">Preferentially expressed in the flower labellum. Low expression in leaves.</text>
</comment>
<comment type="similarity">
    <text evidence="5">Belongs to the fatty acid desaturase type 2 family.</text>
</comment>
<organism>
    <name type="scientific">Ophrys arachnitiformis subsp. archipelagi</name>
    <name type="common">Orchid</name>
    <name type="synonym">Ophrys exaltata subsp. archipelagi</name>
    <dbReference type="NCBI Taxonomy" id="884019"/>
    <lineage>
        <taxon>Eukaryota</taxon>
        <taxon>Viridiplantae</taxon>
        <taxon>Streptophyta</taxon>
        <taxon>Embryophyta</taxon>
        <taxon>Tracheophyta</taxon>
        <taxon>Spermatophyta</taxon>
        <taxon>Magnoliopsida</taxon>
        <taxon>Liliopsida</taxon>
        <taxon>Asparagales</taxon>
        <taxon>Orchidaceae</taxon>
        <taxon>Orchidoideae</taxon>
        <taxon>Orchideae</taxon>
        <taxon>Orchidinae</taxon>
        <taxon>Ophrys</taxon>
    </lineage>
</organism>
<protein>
    <recommendedName>
        <fullName>Palmitoyl-[acyl-carrier-protein] 4-desaturase 3, chloroplastic</fullName>
        <ecNumber evidence="2">1.14.19.11</ecNumber>
    </recommendedName>
    <alternativeName>
        <fullName>Acyl-[acyl-carrier-protein] desaturase 3</fullName>
    </alternativeName>
</protein>
<reference key="1">
    <citation type="journal article" date="2011" name="Proc. Natl. Acad. Sci. U.S.A.">
        <title>Stearoyl-acyl carrier protein desaturases are associated with floral isolation in sexually deceptive orchids.</title>
        <authorList>
            <person name="Schlueter P.M."/>
            <person name="Xu S."/>
            <person name="Gagliardini V."/>
            <person name="Whittle E."/>
            <person name="Shanklin J."/>
            <person name="Grossniklaus U."/>
            <person name="Schiestl F.P."/>
        </authorList>
    </citation>
    <scope>NUCLEOTIDE SEQUENCE [MRNA]</scope>
    <scope>TISSUE SPECIFICITY</scope>
    <source>
        <tissue>Flower</tissue>
    </source>
</reference>
<sequence length="398" mass="45413">MALRSLFLPNAFPNASSFRGGSRRGAAPRAMPIVMKSNVEVGARNEIAKKPFTPPFEIHEQITHSLPPEKIEIFKSLEGWATDNILIHLRPVEKSWQPQDYLPDPSAESFHDQVKELRQRSKEIPDDYFVALVGDMITEEALPTYQTMLNTLDGVRDETGASLTSWAVWTRAWTAEENRHGDLLNKYLYLTGRVDMRQIEKTIQYLIGSGMDPRTENNPYLGFIYTSFQERATSISHGNTARHAKDYGDLSLAQVCGIIASDEKRHEKAYTKIIEKLFEIDPDATVLAFADMMKKKISMPAHLMYDGRDDNLFKHFSSVAQRLGVYTAKDYADILEFLVERWNVEELTGLSSEGRKAQDYVCTLVPRIRKVDERAQGMAKKGGQTMRFSWIHDREVML</sequence>
<gene>
    <name type="primary">SAD3</name>
</gene>
<evidence type="ECO:0000250" key="1">
    <source>
        <dbReference type="UniProtKB" id="P22337"/>
    </source>
</evidence>
<evidence type="ECO:0000250" key="2">
    <source>
        <dbReference type="UniProtKB" id="Q4KN79"/>
    </source>
</evidence>
<evidence type="ECO:0000255" key="3"/>
<evidence type="ECO:0000269" key="4">
    <source>
    </source>
</evidence>
<evidence type="ECO:0000305" key="5"/>
<feature type="transit peptide" description="Chloroplast" evidence="3">
    <location>
        <begin position="1"/>
        <end position="29"/>
    </location>
</feature>
<feature type="chain" id="PRO_0000417067" description="Palmitoyl-[acyl-carrier-protein] 4-desaturase 3, chloroplastic">
    <location>
        <begin position="30"/>
        <end position="398"/>
    </location>
</feature>
<feature type="binding site" evidence="1">
    <location>
        <position position="139"/>
    </location>
    <ligand>
        <name>Fe cation</name>
        <dbReference type="ChEBI" id="CHEBI:24875"/>
        <label>1</label>
    </ligand>
</feature>
<feature type="binding site" evidence="1">
    <location>
        <position position="177"/>
    </location>
    <ligand>
        <name>Fe cation</name>
        <dbReference type="ChEBI" id="CHEBI:24875"/>
        <label>1</label>
    </ligand>
</feature>
<feature type="binding site" evidence="1">
    <location>
        <position position="177"/>
    </location>
    <ligand>
        <name>Fe cation</name>
        <dbReference type="ChEBI" id="CHEBI:24875"/>
        <label>2</label>
    </ligand>
</feature>
<feature type="binding site" evidence="1">
    <location>
        <position position="180"/>
    </location>
    <ligand>
        <name>Fe cation</name>
        <dbReference type="ChEBI" id="CHEBI:24875"/>
        <label>1</label>
    </ligand>
</feature>
<feature type="binding site" evidence="1">
    <location>
        <position position="230"/>
    </location>
    <ligand>
        <name>Fe cation</name>
        <dbReference type="ChEBI" id="CHEBI:24875"/>
        <label>2</label>
    </ligand>
</feature>
<feature type="binding site" evidence="1">
    <location>
        <position position="263"/>
    </location>
    <ligand>
        <name>Fe cation</name>
        <dbReference type="ChEBI" id="CHEBI:24875"/>
        <label>1</label>
    </ligand>
</feature>
<feature type="binding site" evidence="1">
    <location>
        <position position="263"/>
    </location>
    <ligand>
        <name>Fe cation</name>
        <dbReference type="ChEBI" id="CHEBI:24875"/>
        <label>2</label>
    </ligand>
</feature>
<feature type="binding site" evidence="1">
    <location>
        <position position="266"/>
    </location>
    <ligand>
        <name>Fe cation</name>
        <dbReference type="ChEBI" id="CHEBI:24875"/>
        <label>2</label>
    </ligand>
</feature>
<dbReference type="EC" id="1.14.19.11" evidence="2"/>
<dbReference type="EMBL" id="FR688107">
    <property type="protein sequence ID" value="CBW95564.1"/>
    <property type="molecule type" value="mRNA"/>
</dbReference>
<dbReference type="SMR" id="E3PZS0"/>
<dbReference type="UniPathway" id="UPA00199"/>
<dbReference type="GO" id="GO:0009570">
    <property type="term" value="C:chloroplast stroma"/>
    <property type="evidence" value="ECO:0007669"/>
    <property type="project" value="UniProtKB-SubCell"/>
</dbReference>
<dbReference type="GO" id="GO:0046872">
    <property type="term" value="F:metal ion binding"/>
    <property type="evidence" value="ECO:0007669"/>
    <property type="project" value="UniProtKB-KW"/>
</dbReference>
<dbReference type="GO" id="GO:0045300">
    <property type="term" value="F:stearoyl-[ACP] desaturase activity"/>
    <property type="evidence" value="ECO:0007669"/>
    <property type="project" value="InterPro"/>
</dbReference>
<dbReference type="GO" id="GO:0006633">
    <property type="term" value="P:fatty acid biosynthetic process"/>
    <property type="evidence" value="ECO:0007669"/>
    <property type="project" value="UniProtKB-KW"/>
</dbReference>
<dbReference type="CDD" id="cd01050">
    <property type="entry name" value="Acyl_ACP_Desat"/>
    <property type="match status" value="1"/>
</dbReference>
<dbReference type="FunFam" id="1.10.620.20:FF:000002">
    <property type="entry name" value="Stearoyl-[acyl-carrier-protein] 9-desaturase, chloroplastic"/>
    <property type="match status" value="1"/>
</dbReference>
<dbReference type="Gene3D" id="1.10.620.20">
    <property type="entry name" value="Ribonucleotide Reductase, subunit A"/>
    <property type="match status" value="1"/>
</dbReference>
<dbReference type="InterPro" id="IPR005803">
    <property type="entry name" value="FADS-2_CS"/>
</dbReference>
<dbReference type="InterPro" id="IPR005067">
    <property type="entry name" value="Fatty_acid_desaturase-2"/>
</dbReference>
<dbReference type="InterPro" id="IPR009078">
    <property type="entry name" value="Ferritin-like_SF"/>
</dbReference>
<dbReference type="InterPro" id="IPR012348">
    <property type="entry name" value="RNR-like"/>
</dbReference>
<dbReference type="PANTHER" id="PTHR31155">
    <property type="entry name" value="ACYL- ACYL-CARRIER-PROTEIN DESATURASE-RELATED"/>
    <property type="match status" value="1"/>
</dbReference>
<dbReference type="PANTHER" id="PTHR31155:SF9">
    <property type="entry name" value="STEAROYL-[ACYL-CARRIER-PROTEIN] 9-DESATURASE 7, CHLOROPLASTIC"/>
    <property type="match status" value="1"/>
</dbReference>
<dbReference type="Pfam" id="PF03405">
    <property type="entry name" value="FA_desaturase_2"/>
    <property type="match status" value="1"/>
</dbReference>
<dbReference type="PIRSF" id="PIRSF000346">
    <property type="entry name" value="Dlt9_acylACP_des"/>
    <property type="match status" value="1"/>
</dbReference>
<dbReference type="SUPFAM" id="SSF47240">
    <property type="entry name" value="Ferritin-like"/>
    <property type="match status" value="1"/>
</dbReference>
<dbReference type="PROSITE" id="PS00574">
    <property type="entry name" value="FATTY_ACID_DESATUR_2"/>
    <property type="match status" value="1"/>
</dbReference>
<accession>E3PZS0</accession>